<comment type="function">
    <text evidence="1">Scaffold protein that may play a role in cell adhesion, cell spreading and in the reorganization of the actin cytoskeleton. Plays a role in the regulation of cell proliferation. May act as a tumor suppressor (By similarity).</text>
</comment>
<comment type="subunit">
    <text evidence="1">Interacts via LIM domain 1 with ZYX. Interacts (via LIM domain 3) with ENAH and VASP. Interacts with ALKBH4, talin, actin, alpha-actinin, GRIP1 and PXN (By similarity). Interacts (via LIM domain 2) with ACTL7A (via N-terminus). Heterodimer with ACTL7A; the heterodimer interacts with ENAH to form a heterotrimer (By similarity).</text>
</comment>
<comment type="subcellular location">
    <subcellularLocation>
        <location evidence="1">Cytoplasm</location>
    </subcellularLocation>
    <subcellularLocation>
        <location evidence="1">Cell junction</location>
        <location evidence="1">Focal adhesion</location>
    </subcellularLocation>
    <text evidence="1">Detected along actin stress fibers.</text>
</comment>
<comment type="domain">
    <text evidence="1">The N-terminal and the C-terminal halves of the protein can associate with each other, thereby hindering interactions with ZYX.</text>
</comment>
<comment type="similarity">
    <text evidence="5">Belongs to the prickle / espinas / testin family.</text>
</comment>
<reference key="1">
    <citation type="submission" date="2006-01" db="EMBL/GenBank/DDBJ databases">
        <title>NISC comparative sequencing initiative.</title>
        <authorList>
            <person name="Antonellis A."/>
            <person name="Ayele K."/>
            <person name="Benjamin B."/>
            <person name="Blakesley R.W."/>
            <person name="Boakye A."/>
            <person name="Bouffard G.G."/>
            <person name="Brinkley C."/>
            <person name="Brooks S."/>
            <person name="Chu G."/>
            <person name="Coleman H."/>
            <person name="Engle J."/>
            <person name="Gestole M."/>
            <person name="Greene A."/>
            <person name="Guan X."/>
            <person name="Gupta J."/>
            <person name="Haghighi P."/>
            <person name="Han J."/>
            <person name="Hansen N."/>
            <person name="Ho S.-L."/>
            <person name="Hu P."/>
            <person name="Hunter G."/>
            <person name="Hurle B."/>
            <person name="Idol J.R."/>
            <person name="Kwong P."/>
            <person name="Laric P."/>
            <person name="Larson S."/>
            <person name="Lee-Lin S.-Q."/>
            <person name="Legaspi R."/>
            <person name="Madden M."/>
            <person name="Maduro Q.L."/>
            <person name="Maduro V.B."/>
            <person name="Margulies E.H."/>
            <person name="Masiello C."/>
            <person name="Maskeri B."/>
            <person name="McDowell J."/>
            <person name="Mojidi H.A."/>
            <person name="Mullikin J.C."/>
            <person name="Oestreicher J.S."/>
            <person name="Park M."/>
            <person name="Portnoy M.E."/>
            <person name="Prasad A."/>
            <person name="Puri O."/>
            <person name="Reddix-Dugue N."/>
            <person name="Schandler K."/>
            <person name="Schueler M.G."/>
            <person name="Sison C."/>
            <person name="Stantripop S."/>
            <person name="Stephen E."/>
            <person name="Taye A."/>
            <person name="Thomas J.W."/>
            <person name="Thomas P.J."/>
            <person name="Tsipouri V."/>
            <person name="Ung L."/>
            <person name="Vogt J.L."/>
            <person name="Wetherby K.D."/>
            <person name="Young A."/>
            <person name="Green E.D."/>
        </authorList>
    </citation>
    <scope>NUCLEOTIDE SEQUENCE [LARGE SCALE GENOMIC DNA]</scope>
</reference>
<accession>Q2IBC3</accession>
<evidence type="ECO:0000250" key="1"/>
<evidence type="ECO:0000255" key="2">
    <source>
        <dbReference type="PROSITE-ProRule" id="PRU00125"/>
    </source>
</evidence>
<evidence type="ECO:0000255" key="3">
    <source>
        <dbReference type="PROSITE-ProRule" id="PRU00636"/>
    </source>
</evidence>
<evidence type="ECO:0000256" key="4">
    <source>
        <dbReference type="SAM" id="MobiDB-lite"/>
    </source>
</evidence>
<evidence type="ECO:0000305" key="5"/>
<dbReference type="EMBL" id="DP000028">
    <property type="protein sequence ID" value="ABC87469.1"/>
    <property type="molecule type" value="Genomic_DNA"/>
</dbReference>
<dbReference type="SMR" id="Q2IBC3"/>
<dbReference type="FunCoup" id="Q2IBC3">
    <property type="interactions" value="735"/>
</dbReference>
<dbReference type="InParanoid" id="Q2IBC3"/>
<dbReference type="Proteomes" id="UP000472240">
    <property type="component" value="Unplaced"/>
</dbReference>
<dbReference type="GO" id="GO:0005737">
    <property type="term" value="C:cytoplasm"/>
    <property type="evidence" value="ECO:0000250"/>
    <property type="project" value="UniProtKB"/>
</dbReference>
<dbReference type="GO" id="GO:0005925">
    <property type="term" value="C:focal adhesion"/>
    <property type="evidence" value="ECO:0007669"/>
    <property type="project" value="UniProtKB-SubCell"/>
</dbReference>
<dbReference type="GO" id="GO:0008270">
    <property type="term" value="F:zinc ion binding"/>
    <property type="evidence" value="ECO:0000250"/>
    <property type="project" value="UniProtKB"/>
</dbReference>
<dbReference type="GO" id="GO:0008285">
    <property type="term" value="P:negative regulation of cell population proliferation"/>
    <property type="evidence" value="ECO:0000250"/>
    <property type="project" value="UniProtKB"/>
</dbReference>
<dbReference type="CDD" id="cd09413">
    <property type="entry name" value="LIM1_Testin"/>
    <property type="match status" value="1"/>
</dbReference>
<dbReference type="CDD" id="cd09416">
    <property type="entry name" value="LIM2_Testin"/>
    <property type="match status" value="1"/>
</dbReference>
<dbReference type="CDD" id="cd09419">
    <property type="entry name" value="LIM3_Testin"/>
    <property type="match status" value="1"/>
</dbReference>
<dbReference type="CDD" id="cd09829">
    <property type="entry name" value="PET_testin"/>
    <property type="match status" value="1"/>
</dbReference>
<dbReference type="FunFam" id="2.10.110.10:FF:000061">
    <property type="entry name" value="Testin"/>
    <property type="match status" value="1"/>
</dbReference>
<dbReference type="FunFam" id="2.10.110.10:FF:000065">
    <property type="entry name" value="Testin"/>
    <property type="match status" value="1"/>
</dbReference>
<dbReference type="FunFam" id="2.10.110.10:FF:000005">
    <property type="entry name" value="Testin isoform 1"/>
    <property type="match status" value="1"/>
</dbReference>
<dbReference type="Gene3D" id="2.10.110.10">
    <property type="entry name" value="Cysteine Rich Protein"/>
    <property type="match status" value="3"/>
</dbReference>
<dbReference type="InterPro" id="IPR034958">
    <property type="entry name" value="LIM1_Testin"/>
</dbReference>
<dbReference type="InterPro" id="IPR034959">
    <property type="entry name" value="LIM2_Testin"/>
</dbReference>
<dbReference type="InterPro" id="IPR034960">
    <property type="entry name" value="LIM3_Testin"/>
</dbReference>
<dbReference type="InterPro" id="IPR010442">
    <property type="entry name" value="PET_domain"/>
</dbReference>
<dbReference type="InterPro" id="IPR033724">
    <property type="entry name" value="PET_testin"/>
</dbReference>
<dbReference type="InterPro" id="IPR047120">
    <property type="entry name" value="Pk/Esn/Tes"/>
</dbReference>
<dbReference type="InterPro" id="IPR001781">
    <property type="entry name" value="Znf_LIM"/>
</dbReference>
<dbReference type="PANTHER" id="PTHR24211">
    <property type="entry name" value="LIM DOMAIN-CONTAINING PROTEIN"/>
    <property type="match status" value="1"/>
</dbReference>
<dbReference type="PANTHER" id="PTHR24211:SF1">
    <property type="entry name" value="TESTIN"/>
    <property type="match status" value="1"/>
</dbReference>
<dbReference type="Pfam" id="PF00412">
    <property type="entry name" value="LIM"/>
    <property type="match status" value="3"/>
</dbReference>
<dbReference type="Pfam" id="PF06297">
    <property type="entry name" value="PET"/>
    <property type="match status" value="1"/>
</dbReference>
<dbReference type="SMART" id="SM00132">
    <property type="entry name" value="LIM"/>
    <property type="match status" value="3"/>
</dbReference>
<dbReference type="SUPFAM" id="SSF57716">
    <property type="entry name" value="Glucocorticoid receptor-like (DNA-binding domain)"/>
    <property type="match status" value="2"/>
</dbReference>
<dbReference type="PROSITE" id="PS00478">
    <property type="entry name" value="LIM_DOMAIN_1"/>
    <property type="match status" value="2"/>
</dbReference>
<dbReference type="PROSITE" id="PS50023">
    <property type="entry name" value="LIM_DOMAIN_2"/>
    <property type="match status" value="3"/>
</dbReference>
<dbReference type="PROSITE" id="PS51303">
    <property type="entry name" value="PET"/>
    <property type="match status" value="1"/>
</dbReference>
<gene>
    <name type="primary">TES</name>
</gene>
<name>TES_RHIFE</name>
<feature type="chain" id="PRO_0000251902" description="Testin">
    <location>
        <begin position="1"/>
        <end position="421"/>
    </location>
</feature>
<feature type="domain" description="PET" evidence="3">
    <location>
        <begin position="92"/>
        <end position="199"/>
    </location>
</feature>
<feature type="domain" description="LIM zinc-binding 1" evidence="2">
    <location>
        <begin position="234"/>
        <end position="297"/>
    </location>
</feature>
<feature type="domain" description="LIM zinc-binding 2" evidence="2">
    <location>
        <begin position="299"/>
        <end position="359"/>
    </location>
</feature>
<feature type="domain" description="LIM zinc-binding 3" evidence="2">
    <location>
        <begin position="362"/>
        <end position="421"/>
    </location>
</feature>
<feature type="region of interest" description="Disordered" evidence="4">
    <location>
        <begin position="134"/>
        <end position="164"/>
    </location>
</feature>
<feature type="compositionally biased region" description="Basic and acidic residues" evidence="4">
    <location>
        <begin position="155"/>
        <end position="164"/>
    </location>
</feature>
<protein>
    <recommendedName>
        <fullName>Testin</fullName>
    </recommendedName>
</protein>
<keyword id="KW-0965">Cell junction</keyword>
<keyword id="KW-0963">Cytoplasm</keyword>
<keyword id="KW-0440">LIM domain</keyword>
<keyword id="KW-0479">Metal-binding</keyword>
<keyword id="KW-1185">Reference proteome</keyword>
<keyword id="KW-0677">Repeat</keyword>
<keyword id="KW-0862">Zinc</keyword>
<sequence length="421" mass="47661">MDLAVKVKKMGLGHEQGFGAPCLKCKEKCEGFELHFWRKICRNCKCGQEEHDVLLSNEEDRKVGKLFEDTKYTTLIAKLKSDGIPMYKRNVMILTNPVAAKKNVSINTVTYEWAPPVQNQALARHYMQMLPKEKQPVAGSEGAQYRKKQLAKQLPAHDQDPSKCHELSPKEVKEMEQFVKKYKSEALGVGDVKLPREMDAQGPPRIDSPGGDRSTAAAVGAMDGKSAEHRRTQYSCYCCKLSMKEGDPAIYAERAGYDKLWHPACFVCSTCEELLVDMIYFWKNGKLYCGRHYCDSEKPRCAGCDELIFSNEYTQAENQNWHLKHFCCFDCDNILAGEIYVMVDDKPVCKPCYVKNHAVVCQGCHNAIDPEVQRVTYNGFSWHAAAECFLCSCCSKCLLGQKFMPVEGMVFCSVECKKMMS</sequence>
<proteinExistence type="inferred from homology"/>
<organism>
    <name type="scientific">Rhinolophus ferrumequinum</name>
    <name type="common">Greater horseshoe bat</name>
    <dbReference type="NCBI Taxonomy" id="59479"/>
    <lineage>
        <taxon>Eukaryota</taxon>
        <taxon>Metazoa</taxon>
        <taxon>Chordata</taxon>
        <taxon>Craniata</taxon>
        <taxon>Vertebrata</taxon>
        <taxon>Euteleostomi</taxon>
        <taxon>Mammalia</taxon>
        <taxon>Eutheria</taxon>
        <taxon>Laurasiatheria</taxon>
        <taxon>Chiroptera</taxon>
        <taxon>Yinpterochiroptera</taxon>
        <taxon>Rhinolophoidea</taxon>
        <taxon>Rhinolophidae</taxon>
        <taxon>Rhinolophinae</taxon>
        <taxon>Rhinolophus</taxon>
    </lineage>
</organism>